<evidence type="ECO:0000255" key="1">
    <source>
        <dbReference type="HAMAP-Rule" id="MF_01014"/>
    </source>
</evidence>
<dbReference type="EC" id="5.3.1.16" evidence="1"/>
<dbReference type="EMBL" id="CP001161">
    <property type="protein sequence ID" value="ACL30478.1"/>
    <property type="molecule type" value="Genomic_DNA"/>
</dbReference>
<dbReference type="RefSeq" id="WP_009874059.1">
    <property type="nucleotide sequence ID" value="NC_011833.1"/>
</dbReference>
<dbReference type="SMR" id="B8D8Q6"/>
<dbReference type="KEGG" id="bap:BUAP5A_102"/>
<dbReference type="HOGENOM" id="CLU_048577_1_2_6"/>
<dbReference type="OrthoDB" id="9807749at2"/>
<dbReference type="UniPathway" id="UPA00031">
    <property type="reaction ID" value="UER00009"/>
</dbReference>
<dbReference type="Proteomes" id="UP000006904">
    <property type="component" value="Chromosome"/>
</dbReference>
<dbReference type="GO" id="GO:0005737">
    <property type="term" value="C:cytoplasm"/>
    <property type="evidence" value="ECO:0007669"/>
    <property type="project" value="UniProtKB-SubCell"/>
</dbReference>
<dbReference type="GO" id="GO:0003949">
    <property type="term" value="F:1-(5-phosphoribosyl)-5-[(5-phosphoribosylamino)methylideneamino]imidazole-4-carboxamide isomerase activity"/>
    <property type="evidence" value="ECO:0007669"/>
    <property type="project" value="UniProtKB-UniRule"/>
</dbReference>
<dbReference type="GO" id="GO:0000105">
    <property type="term" value="P:L-histidine biosynthetic process"/>
    <property type="evidence" value="ECO:0007669"/>
    <property type="project" value="UniProtKB-UniRule"/>
</dbReference>
<dbReference type="GO" id="GO:0000162">
    <property type="term" value="P:L-tryptophan biosynthetic process"/>
    <property type="evidence" value="ECO:0007669"/>
    <property type="project" value="TreeGrafter"/>
</dbReference>
<dbReference type="CDD" id="cd04732">
    <property type="entry name" value="HisA"/>
    <property type="match status" value="1"/>
</dbReference>
<dbReference type="FunFam" id="3.20.20.70:FF:000009">
    <property type="entry name" value="1-(5-phosphoribosyl)-5-[(5-phosphoribosylamino)methylideneamino] imidazole-4-carboxamide isomerase"/>
    <property type="match status" value="1"/>
</dbReference>
<dbReference type="Gene3D" id="3.20.20.70">
    <property type="entry name" value="Aldolase class I"/>
    <property type="match status" value="1"/>
</dbReference>
<dbReference type="HAMAP" id="MF_01014">
    <property type="entry name" value="HisA"/>
    <property type="match status" value="1"/>
</dbReference>
<dbReference type="InterPro" id="IPR013785">
    <property type="entry name" value="Aldolase_TIM"/>
</dbReference>
<dbReference type="InterPro" id="IPR006062">
    <property type="entry name" value="His_biosynth"/>
</dbReference>
<dbReference type="InterPro" id="IPR006063">
    <property type="entry name" value="HisA_bact_arch"/>
</dbReference>
<dbReference type="InterPro" id="IPR044524">
    <property type="entry name" value="Isoase_HisA-like"/>
</dbReference>
<dbReference type="InterPro" id="IPR023016">
    <property type="entry name" value="Isoase_HisA-like_bact"/>
</dbReference>
<dbReference type="InterPro" id="IPR011060">
    <property type="entry name" value="RibuloseP-bd_barrel"/>
</dbReference>
<dbReference type="NCBIfam" id="TIGR00007">
    <property type="entry name" value="1-(5-phosphoribosyl)-5-[(5-phosphoribosylamino)methylideneamino]imidazole-4-carboxamide isomerase"/>
    <property type="match status" value="1"/>
</dbReference>
<dbReference type="PANTHER" id="PTHR43090">
    <property type="entry name" value="1-(5-PHOSPHORIBOSYL)-5-[(5-PHOSPHORIBOSYLAMINO)METHYLIDENEAMINO] IMIDAZOLE-4-CARBOXAMIDE ISOMERASE"/>
    <property type="match status" value="1"/>
</dbReference>
<dbReference type="PANTHER" id="PTHR43090:SF2">
    <property type="entry name" value="1-(5-PHOSPHORIBOSYL)-5-[(5-PHOSPHORIBOSYLAMINO)METHYLIDENEAMINO] IMIDAZOLE-4-CARBOXAMIDE ISOMERASE"/>
    <property type="match status" value="1"/>
</dbReference>
<dbReference type="Pfam" id="PF00977">
    <property type="entry name" value="His_biosynth"/>
    <property type="match status" value="1"/>
</dbReference>
<dbReference type="SUPFAM" id="SSF51366">
    <property type="entry name" value="Ribulose-phoshate binding barrel"/>
    <property type="match status" value="1"/>
</dbReference>
<organism>
    <name type="scientific">Buchnera aphidicola subsp. Acyrthosiphon pisum (strain 5A)</name>
    <dbReference type="NCBI Taxonomy" id="563178"/>
    <lineage>
        <taxon>Bacteria</taxon>
        <taxon>Pseudomonadati</taxon>
        <taxon>Pseudomonadota</taxon>
        <taxon>Gammaproteobacteria</taxon>
        <taxon>Enterobacterales</taxon>
        <taxon>Erwiniaceae</taxon>
        <taxon>Buchnera</taxon>
    </lineage>
</organism>
<name>HIS4_BUCA5</name>
<keyword id="KW-0028">Amino-acid biosynthesis</keyword>
<keyword id="KW-0963">Cytoplasm</keyword>
<keyword id="KW-0368">Histidine biosynthesis</keyword>
<keyword id="KW-0413">Isomerase</keyword>
<gene>
    <name evidence="1" type="primary">hisA</name>
    <name type="ordered locus">BUAP5A_102</name>
</gene>
<protein>
    <recommendedName>
        <fullName evidence="1">1-(5-phosphoribosyl)-5-[(5-phosphoribosylamino)methylideneamino] imidazole-4-carboxamide isomerase</fullName>
        <ecNumber evidence="1">5.3.1.16</ecNumber>
    </recommendedName>
    <alternativeName>
        <fullName evidence="1">Phosphoribosylformimino-5-aminoimidazole carboxamide ribotide isomerase</fullName>
    </alternativeName>
</protein>
<comment type="catalytic activity">
    <reaction evidence="1">
        <text>1-(5-phospho-beta-D-ribosyl)-5-[(5-phospho-beta-D-ribosylamino)methylideneamino]imidazole-4-carboxamide = 5-[(5-phospho-1-deoxy-D-ribulos-1-ylimino)methylamino]-1-(5-phospho-beta-D-ribosyl)imidazole-4-carboxamide</text>
        <dbReference type="Rhea" id="RHEA:15469"/>
        <dbReference type="ChEBI" id="CHEBI:58435"/>
        <dbReference type="ChEBI" id="CHEBI:58525"/>
        <dbReference type="EC" id="5.3.1.16"/>
    </reaction>
</comment>
<comment type="pathway">
    <text evidence="1">Amino-acid biosynthesis; L-histidine biosynthesis; L-histidine from 5-phospho-alpha-D-ribose 1-diphosphate: step 4/9.</text>
</comment>
<comment type="subcellular location">
    <subcellularLocation>
        <location evidence="1">Cytoplasm</location>
    </subcellularLocation>
</comment>
<comment type="similarity">
    <text evidence="1">Belongs to the HisA/HisF family.</text>
</comment>
<reference key="1">
    <citation type="journal article" date="2009" name="Science">
        <title>The dynamics and time scale of ongoing genomic erosion in symbiotic bacteria.</title>
        <authorList>
            <person name="Moran N.A."/>
            <person name="McLaughlin H.J."/>
            <person name="Sorek R."/>
        </authorList>
    </citation>
    <scope>NUCLEOTIDE SEQUENCE [LARGE SCALE GENOMIC DNA]</scope>
    <source>
        <strain>5A</strain>
    </source>
</reference>
<sequence length="246" mass="27568">MIIPAFDLINGRTVRLYQGDYSNQKNYNVNLFNSLEVYKSKGIEIVHLVDLDGAKNSANRQIELFKKIVSHTTVPVQVGGGIRTTKDISTLLDLGVKRVVIGSSIVSNKKQVKQWLNFYGPDAIVLALDVHVDGSNKKEISIDGWQKKTNFILEEIIEYFLSSGLKHVLCTDISRDGTLLGPNFKLYKEICSNFKNINFQASGGVASLQDIIFLKKTGVKSIIIGRSLLEKKFTIEEAVKCWQRES</sequence>
<feature type="chain" id="PRO_1000148958" description="1-(5-phosphoribosyl)-5-[(5-phosphoribosylamino)methylideneamino] imidazole-4-carboxamide isomerase">
    <location>
        <begin position="1"/>
        <end position="246"/>
    </location>
</feature>
<feature type="active site" description="Proton acceptor" evidence="1">
    <location>
        <position position="7"/>
    </location>
</feature>
<feature type="active site" description="Proton donor" evidence="1">
    <location>
        <position position="129"/>
    </location>
</feature>
<proteinExistence type="inferred from homology"/>
<accession>B8D8Q6</accession>